<protein>
    <recommendedName>
        <fullName>Tubulin alpha-1 chain</fullName>
        <ecNumber evidence="2">3.6.5.-</ecNumber>
    </recommendedName>
</protein>
<sequence length="450" mass="49908">MRECISIHVGQAGVQIGNACWELYCLEHGIQPDGQMPSDKTVGGGDDSFNTFFSETGAGKHVPRAVFVDLEPTVVDEVRTGTYRQLFHPEQLITGKEDAANNYARGHYTIGKEIVDLVLDRIRKLADQCTGLQGFLIFHSFGGGTGSGFTSLLMERLSVDYGKKSKLEFAIYPAPQVSTAVVEPYNSILTTHTTLEHSDCAFMVDNEAIYDICRRNLDIERPTYTNLNRLIGQIVSSITASLRFDGALNVDLTEFQTNLVPYPRIHFPLVTYAPVISAEKAYHEQLSVAEITNACFEPANQMVKCDPRHGKYMACCMLYRGDVVPKDVNAAIATIKTKRTIQFVDWCPTGFKVGINYQPPTVVPGGDLAKVQRAVCMLSNTTAIAEAWARLDHKFDLMYAKRAFVHWYVGEGMEEGEFSEAREDLAALEKDYEEVGMDSGDGEGEGAEEY</sequence>
<gene>
    <name type="primary">alphaTub84B</name>
    <name type="synonym">tubA84B</name>
    <name type="ORF">CG1913</name>
</gene>
<organism>
    <name type="scientific">Drosophila melanogaster</name>
    <name type="common">Fruit fly</name>
    <dbReference type="NCBI Taxonomy" id="7227"/>
    <lineage>
        <taxon>Eukaryota</taxon>
        <taxon>Metazoa</taxon>
        <taxon>Ecdysozoa</taxon>
        <taxon>Arthropoda</taxon>
        <taxon>Hexapoda</taxon>
        <taxon>Insecta</taxon>
        <taxon>Pterygota</taxon>
        <taxon>Neoptera</taxon>
        <taxon>Endopterygota</taxon>
        <taxon>Diptera</taxon>
        <taxon>Brachycera</taxon>
        <taxon>Muscomorpha</taxon>
        <taxon>Ephydroidea</taxon>
        <taxon>Drosophilidae</taxon>
        <taxon>Drosophila</taxon>
        <taxon>Sophophora</taxon>
    </lineage>
</organism>
<feature type="chain" id="PRO_0000048158" description="Tubulin alpha-1 chain">
    <location>
        <begin position="1"/>
        <end position="450"/>
    </location>
</feature>
<feature type="active site" evidence="2">
    <location>
        <position position="254"/>
    </location>
</feature>
<feature type="binding site" evidence="2">
    <location>
        <position position="11"/>
    </location>
    <ligand>
        <name>GTP</name>
        <dbReference type="ChEBI" id="CHEBI:37565"/>
    </ligand>
</feature>
<feature type="binding site" evidence="2">
    <location>
        <position position="71"/>
    </location>
    <ligand>
        <name>GTP</name>
        <dbReference type="ChEBI" id="CHEBI:37565"/>
    </ligand>
</feature>
<feature type="binding site" evidence="2">
    <location>
        <position position="71"/>
    </location>
    <ligand>
        <name>Mg(2+)</name>
        <dbReference type="ChEBI" id="CHEBI:18420"/>
    </ligand>
</feature>
<feature type="binding site" evidence="2">
    <location>
        <position position="140"/>
    </location>
    <ligand>
        <name>GTP</name>
        <dbReference type="ChEBI" id="CHEBI:37565"/>
    </ligand>
</feature>
<feature type="binding site" evidence="2">
    <location>
        <position position="144"/>
    </location>
    <ligand>
        <name>GTP</name>
        <dbReference type="ChEBI" id="CHEBI:37565"/>
    </ligand>
</feature>
<feature type="binding site" evidence="2">
    <location>
        <position position="145"/>
    </location>
    <ligand>
        <name>GTP</name>
        <dbReference type="ChEBI" id="CHEBI:37565"/>
    </ligand>
</feature>
<feature type="binding site" evidence="2">
    <location>
        <position position="179"/>
    </location>
    <ligand>
        <name>GTP</name>
        <dbReference type="ChEBI" id="CHEBI:37565"/>
    </ligand>
</feature>
<feature type="binding site" evidence="2">
    <location>
        <position position="206"/>
    </location>
    <ligand>
        <name>GTP</name>
        <dbReference type="ChEBI" id="CHEBI:37565"/>
    </ligand>
</feature>
<feature type="binding site" evidence="2">
    <location>
        <position position="228"/>
    </location>
    <ligand>
        <name>GTP</name>
        <dbReference type="ChEBI" id="CHEBI:37565"/>
    </ligand>
</feature>
<feature type="site" description="Involved in polymerization">
    <location>
        <position position="450"/>
    </location>
</feature>
<feature type="modified residue" description="N6-acetyllysine" evidence="6">
    <location>
        <position position="40"/>
    </location>
</feature>
<feature type="mutagenesis site" description="Mimics constitutively Lys-40-acetylated alpha-tubulin. Rescues egg chamber fusion phenotype of mutants lacking lky/alpha-tubulin N-acetyltransferase 2." evidence="6">
    <original>K</original>
    <variation>Q</variation>
    <location>
        <position position="40"/>
    </location>
</feature>
<feature type="mutagenesis site" description="Non-acetylateable. Similar egg chamber fusion phenotype to mutants lacking lky/alpha-tubulin N-acetyltransferase 2." evidence="6">
    <original>K</original>
    <variation>R</variation>
    <variation>A</variation>
    <location>
        <position position="40"/>
    </location>
</feature>
<feature type="strand" evidence="9">
    <location>
        <begin position="4"/>
        <end position="9"/>
    </location>
</feature>
<feature type="helix" evidence="9">
    <location>
        <begin position="10"/>
        <end position="28"/>
    </location>
</feature>
<feature type="strand" evidence="8">
    <location>
        <begin position="45"/>
        <end position="47"/>
    </location>
</feature>
<feature type="helix" evidence="9">
    <location>
        <begin position="48"/>
        <end position="51"/>
    </location>
</feature>
<feature type="strand" evidence="9">
    <location>
        <begin position="53"/>
        <end position="55"/>
    </location>
</feature>
<feature type="strand" evidence="9">
    <location>
        <begin position="61"/>
        <end position="72"/>
    </location>
</feature>
<feature type="helix" evidence="9">
    <location>
        <begin position="73"/>
        <end position="80"/>
    </location>
</feature>
<feature type="turn" evidence="9">
    <location>
        <begin position="82"/>
        <end position="86"/>
    </location>
</feature>
<feature type="helix" evidence="9">
    <location>
        <begin position="89"/>
        <end position="91"/>
    </location>
</feature>
<feature type="strand" evidence="9">
    <location>
        <begin position="92"/>
        <end position="94"/>
    </location>
</feature>
<feature type="helix" evidence="9">
    <location>
        <begin position="103"/>
        <end position="107"/>
    </location>
</feature>
<feature type="helix" evidence="9">
    <location>
        <begin position="111"/>
        <end position="126"/>
    </location>
</feature>
<feature type="strand" evidence="9">
    <location>
        <begin position="134"/>
        <end position="143"/>
    </location>
</feature>
<feature type="helix" evidence="9">
    <location>
        <begin position="144"/>
        <end position="160"/>
    </location>
</feature>
<feature type="strand" evidence="9">
    <location>
        <begin position="164"/>
        <end position="172"/>
    </location>
</feature>
<feature type="turn" evidence="9">
    <location>
        <begin position="175"/>
        <end position="177"/>
    </location>
</feature>
<feature type="helix" evidence="9">
    <location>
        <begin position="183"/>
        <end position="194"/>
    </location>
</feature>
<feature type="turn" evidence="9">
    <location>
        <begin position="195"/>
        <end position="197"/>
    </location>
</feature>
<feature type="strand" evidence="9">
    <location>
        <begin position="199"/>
        <end position="205"/>
    </location>
</feature>
<feature type="helix" evidence="9">
    <location>
        <begin position="206"/>
        <end position="217"/>
    </location>
</feature>
<feature type="helix" evidence="9">
    <location>
        <begin position="224"/>
        <end position="243"/>
    </location>
</feature>
<feature type="strand" evidence="9">
    <location>
        <begin position="247"/>
        <end position="249"/>
    </location>
</feature>
<feature type="helix" evidence="9">
    <location>
        <begin position="253"/>
        <end position="259"/>
    </location>
</feature>
<feature type="strand" evidence="8">
    <location>
        <begin position="261"/>
        <end position="264"/>
    </location>
</feature>
<feature type="strand" evidence="9">
    <location>
        <begin position="269"/>
        <end position="273"/>
    </location>
</feature>
<feature type="helix" evidence="10">
    <location>
        <begin position="278"/>
        <end position="280"/>
    </location>
</feature>
<feature type="helix" evidence="9">
    <location>
        <begin position="288"/>
        <end position="294"/>
    </location>
</feature>
<feature type="helix" evidence="9">
    <location>
        <begin position="298"/>
        <end position="300"/>
    </location>
</feature>
<feature type="strand" evidence="9">
    <location>
        <begin position="301"/>
        <end position="303"/>
    </location>
</feature>
<feature type="helix" evidence="9">
    <location>
        <begin position="307"/>
        <end position="309"/>
    </location>
</feature>
<feature type="strand" evidence="9">
    <location>
        <begin position="312"/>
        <end position="322"/>
    </location>
</feature>
<feature type="helix" evidence="9">
    <location>
        <begin position="325"/>
        <end position="338"/>
    </location>
</feature>
<feature type="strand" evidence="9">
    <location>
        <begin position="349"/>
        <end position="356"/>
    </location>
</feature>
<feature type="strand" evidence="9">
    <location>
        <begin position="366"/>
        <end position="368"/>
    </location>
</feature>
<feature type="strand" evidence="9">
    <location>
        <begin position="372"/>
        <end position="381"/>
    </location>
</feature>
<feature type="helix" evidence="9">
    <location>
        <begin position="382"/>
        <end position="384"/>
    </location>
</feature>
<feature type="helix" evidence="9">
    <location>
        <begin position="385"/>
        <end position="399"/>
    </location>
</feature>
<feature type="turn" evidence="9">
    <location>
        <begin position="400"/>
        <end position="404"/>
    </location>
</feature>
<feature type="helix" evidence="9">
    <location>
        <begin position="405"/>
        <end position="409"/>
    </location>
</feature>
<feature type="turn" evidence="9">
    <location>
        <begin position="410"/>
        <end position="412"/>
    </location>
</feature>
<feature type="helix" evidence="9">
    <location>
        <begin position="415"/>
        <end position="435"/>
    </location>
</feature>
<accession>P06603</accession>
<accession>Q9VI59</accession>
<evidence type="ECO:0000250" key="1"/>
<evidence type="ECO:0000250" key="2">
    <source>
        <dbReference type="UniProtKB" id="P68363"/>
    </source>
</evidence>
<evidence type="ECO:0000250" key="3">
    <source>
        <dbReference type="UniProtKB" id="P91910"/>
    </source>
</evidence>
<evidence type="ECO:0000269" key="4">
    <source>
    </source>
</evidence>
<evidence type="ECO:0000269" key="5">
    <source>
    </source>
</evidence>
<evidence type="ECO:0000269" key="6">
    <source>
    </source>
</evidence>
<evidence type="ECO:0000305" key="7"/>
<evidence type="ECO:0007829" key="8">
    <source>
        <dbReference type="PDB" id="6TIY"/>
    </source>
</evidence>
<evidence type="ECO:0007829" key="9">
    <source>
        <dbReference type="PDB" id="6TIZ"/>
    </source>
</evidence>
<evidence type="ECO:0007829" key="10">
    <source>
        <dbReference type="PDB" id="7QUC"/>
    </source>
</evidence>
<dbReference type="EC" id="3.6.5.-" evidence="2"/>
<dbReference type="EMBL" id="M14643">
    <property type="protein sequence ID" value="AAA28985.1"/>
    <property type="molecule type" value="Genomic_DNA"/>
</dbReference>
<dbReference type="EMBL" id="AE014297">
    <property type="protein sequence ID" value="AAF54067.1"/>
    <property type="molecule type" value="Genomic_DNA"/>
</dbReference>
<dbReference type="EMBL" id="BT012506">
    <property type="protein sequence ID" value="AAS93777.1"/>
    <property type="molecule type" value="mRNA"/>
</dbReference>
<dbReference type="PIR" id="A26488">
    <property type="entry name" value="A26488"/>
</dbReference>
<dbReference type="RefSeq" id="NP_476772.1">
    <property type="nucleotide sequence ID" value="NM_057424.4"/>
</dbReference>
<dbReference type="PDB" id="6TIS">
    <property type="method" value="X-ray"/>
    <property type="resolution" value="2.30 A"/>
    <property type="chains" value="A/C=1-450"/>
</dbReference>
<dbReference type="PDB" id="6TIU">
    <property type="method" value="X-ray"/>
    <property type="resolution" value="3.57 A"/>
    <property type="chains" value="A/C=1-450"/>
</dbReference>
<dbReference type="PDB" id="6TIY">
    <property type="method" value="X-ray"/>
    <property type="resolution" value="2.29 A"/>
    <property type="chains" value="A/C=1-450"/>
</dbReference>
<dbReference type="PDB" id="6TIZ">
    <property type="method" value="X-ray"/>
    <property type="resolution" value="2.20 A"/>
    <property type="chains" value="A/C=1-450"/>
</dbReference>
<dbReference type="PDB" id="7QUC">
    <property type="method" value="EM"/>
    <property type="resolution" value="3.20 A"/>
    <property type="chains" value="A=1-450"/>
</dbReference>
<dbReference type="PDB" id="7QUD">
    <property type="method" value="EM"/>
    <property type="resolution" value="3.47 A"/>
    <property type="chains" value="A=1-450"/>
</dbReference>
<dbReference type="PDB" id="7QUP">
    <property type="method" value="EM"/>
    <property type="resolution" value="3.80 A"/>
    <property type="chains" value="10A/10C/10E/11A/11C/11E/12A/12C/12E/13A/13C/13E/1A/1C/1E/2A/2C/2E/3A/3C/3E/4A/4C/4E/5A/5C/5E/6A/6C/6E=1-436"/>
</dbReference>
<dbReference type="PDB" id="7YSQ">
    <property type="method" value="EM"/>
    <property type="resolution" value="6.80 A"/>
    <property type="chains" value="A/D/E/F=1-450"/>
</dbReference>
<dbReference type="PDB" id="7YSR">
    <property type="method" value="EM"/>
    <property type="resolution" value="4.30 A"/>
    <property type="chains" value="A/C=1-450"/>
</dbReference>
<dbReference type="PDBsum" id="6TIS"/>
<dbReference type="PDBsum" id="6TIU"/>
<dbReference type="PDBsum" id="6TIY"/>
<dbReference type="PDBsum" id="6TIZ"/>
<dbReference type="PDBsum" id="7QUC"/>
<dbReference type="PDBsum" id="7QUD"/>
<dbReference type="PDBsum" id="7QUP"/>
<dbReference type="PDBsum" id="7YSQ"/>
<dbReference type="PDBsum" id="7YSR"/>
<dbReference type="EMDB" id="EMD-14147"/>
<dbReference type="EMDB" id="EMD-14148"/>
<dbReference type="EMDB" id="EMD-14150"/>
<dbReference type="EMDB" id="EMD-34080"/>
<dbReference type="EMDB" id="EMD-34081"/>
<dbReference type="SMR" id="P06603"/>
<dbReference type="BioGRID" id="66045">
    <property type="interactions" value="49"/>
</dbReference>
<dbReference type="DIP" id="DIP-17129N"/>
<dbReference type="FunCoup" id="P06603">
    <property type="interactions" value="782"/>
</dbReference>
<dbReference type="IntAct" id="P06603">
    <property type="interactions" value="4"/>
</dbReference>
<dbReference type="MINT" id="P06603"/>
<dbReference type="STRING" id="7227.FBpp0081153"/>
<dbReference type="PaxDb" id="7227-FBpp0081153"/>
<dbReference type="DNASU" id="40848"/>
<dbReference type="EnsemblMetazoa" id="FBtr0081639">
    <property type="protein sequence ID" value="FBpp0081153"/>
    <property type="gene ID" value="FBgn0003884"/>
</dbReference>
<dbReference type="GeneID" id="40848"/>
<dbReference type="KEGG" id="dme:Dmel_CG1913"/>
<dbReference type="AGR" id="FB:FBgn0003884"/>
<dbReference type="CTD" id="40848"/>
<dbReference type="FlyBase" id="FBgn0003884">
    <property type="gene designation" value="alphaTub84B"/>
</dbReference>
<dbReference type="VEuPathDB" id="VectorBase:FBgn0003884"/>
<dbReference type="eggNOG" id="KOG1376">
    <property type="taxonomic scope" value="Eukaryota"/>
</dbReference>
<dbReference type="GeneTree" id="ENSGT00950000182825"/>
<dbReference type="HOGENOM" id="CLU_015718_0_1_1"/>
<dbReference type="InParanoid" id="P06603"/>
<dbReference type="OMA" id="YMASCIL"/>
<dbReference type="OrthoDB" id="1844at2759"/>
<dbReference type="PhylomeDB" id="P06603"/>
<dbReference type="Reactome" id="R-DME-3371497">
    <property type="pathway name" value="HSP90 chaperone cycle for steroid hormone receptors (SHR) in the presence of ligand"/>
</dbReference>
<dbReference type="Reactome" id="R-DME-6807878">
    <property type="pathway name" value="COPI-mediated anterograde transport"/>
</dbReference>
<dbReference type="Reactome" id="R-DME-6811434">
    <property type="pathway name" value="COPI-dependent Golgi-to-ER retrograde traffic"/>
</dbReference>
<dbReference type="Reactome" id="R-DME-6811436">
    <property type="pathway name" value="COPI-independent Golgi-to-ER retrograde traffic"/>
</dbReference>
<dbReference type="Reactome" id="R-DME-983189">
    <property type="pathway name" value="Kinesins"/>
</dbReference>
<dbReference type="SignaLink" id="P06603"/>
<dbReference type="BioGRID-ORCS" id="40848">
    <property type="hits" value="1 hit in 3 CRISPR screens"/>
</dbReference>
<dbReference type="ChiTaRS" id="alphaTub84B">
    <property type="organism name" value="fly"/>
</dbReference>
<dbReference type="GenomeRNAi" id="40848"/>
<dbReference type="PRO" id="PR:P06603"/>
<dbReference type="Proteomes" id="UP000000803">
    <property type="component" value="Chromosome 3R"/>
</dbReference>
<dbReference type="Bgee" id="FBgn0003884">
    <property type="expression patterns" value="Expressed in cleaving embryo and 283 other cell types or tissues"/>
</dbReference>
<dbReference type="ExpressionAtlas" id="P06603">
    <property type="expression patterns" value="baseline and differential"/>
</dbReference>
<dbReference type="GO" id="GO:0000235">
    <property type="term" value="C:astral microtubule"/>
    <property type="evidence" value="ECO:0000314"/>
    <property type="project" value="FlyBase"/>
</dbReference>
<dbReference type="GO" id="GO:0005813">
    <property type="term" value="C:centrosome"/>
    <property type="evidence" value="ECO:0000314"/>
    <property type="project" value="FlyBase"/>
</dbReference>
<dbReference type="GO" id="GO:0005737">
    <property type="term" value="C:cytoplasm"/>
    <property type="evidence" value="ECO:0007005"/>
    <property type="project" value="FlyBase"/>
</dbReference>
<dbReference type="GO" id="GO:0005874">
    <property type="term" value="C:microtubule"/>
    <property type="evidence" value="ECO:0000314"/>
    <property type="project" value="FlyBase"/>
</dbReference>
<dbReference type="GO" id="GO:0005634">
    <property type="term" value="C:nucleus"/>
    <property type="evidence" value="ECO:0007005"/>
    <property type="project" value="FlyBase"/>
</dbReference>
<dbReference type="GO" id="GO:0048471">
    <property type="term" value="C:perinuclear region of cytoplasm"/>
    <property type="evidence" value="ECO:0000314"/>
    <property type="project" value="FlyBase"/>
</dbReference>
<dbReference type="GO" id="GO:0005819">
    <property type="term" value="C:spindle"/>
    <property type="evidence" value="ECO:0000314"/>
    <property type="project" value="FlyBase"/>
</dbReference>
<dbReference type="GO" id="GO:0005525">
    <property type="term" value="F:GTP binding"/>
    <property type="evidence" value="ECO:0000318"/>
    <property type="project" value="GO_Central"/>
</dbReference>
<dbReference type="GO" id="GO:0016787">
    <property type="term" value="F:hydrolase activity"/>
    <property type="evidence" value="ECO:0007669"/>
    <property type="project" value="UniProtKB-KW"/>
</dbReference>
<dbReference type="GO" id="GO:0046872">
    <property type="term" value="F:metal ion binding"/>
    <property type="evidence" value="ECO:0007669"/>
    <property type="project" value="UniProtKB-KW"/>
</dbReference>
<dbReference type="GO" id="GO:0005200">
    <property type="term" value="F:structural constituent of cytoskeleton"/>
    <property type="evidence" value="ECO:0000318"/>
    <property type="project" value="GO_Central"/>
</dbReference>
<dbReference type="GO" id="GO:0032418">
    <property type="term" value="P:lysosome localization"/>
    <property type="evidence" value="ECO:0000315"/>
    <property type="project" value="FlyBase"/>
</dbReference>
<dbReference type="GO" id="GO:0000226">
    <property type="term" value="P:microtubule cytoskeleton organization"/>
    <property type="evidence" value="ECO:0000318"/>
    <property type="project" value="GO_Central"/>
</dbReference>
<dbReference type="GO" id="GO:0000278">
    <property type="term" value="P:mitotic cell cycle"/>
    <property type="evidence" value="ECO:0000318"/>
    <property type="project" value="GO_Central"/>
</dbReference>
<dbReference type="CDD" id="cd02186">
    <property type="entry name" value="alpha_tubulin"/>
    <property type="match status" value="1"/>
</dbReference>
<dbReference type="FunFam" id="1.10.287.600:FF:000005">
    <property type="entry name" value="Tubulin alpha chain"/>
    <property type="match status" value="1"/>
</dbReference>
<dbReference type="FunFam" id="3.30.1330.20:FF:000001">
    <property type="entry name" value="Tubulin alpha chain"/>
    <property type="match status" value="1"/>
</dbReference>
<dbReference type="FunFam" id="3.40.50.1440:FF:000002">
    <property type="entry name" value="Tubulin alpha chain"/>
    <property type="match status" value="1"/>
</dbReference>
<dbReference type="Gene3D" id="1.10.287.600">
    <property type="entry name" value="Helix hairpin bin"/>
    <property type="match status" value="1"/>
</dbReference>
<dbReference type="Gene3D" id="3.30.1330.20">
    <property type="entry name" value="Tubulin/FtsZ, C-terminal domain"/>
    <property type="match status" value="1"/>
</dbReference>
<dbReference type="Gene3D" id="3.40.50.1440">
    <property type="entry name" value="Tubulin/FtsZ, GTPase domain"/>
    <property type="match status" value="1"/>
</dbReference>
<dbReference type="InterPro" id="IPR002452">
    <property type="entry name" value="Alpha_tubulin"/>
</dbReference>
<dbReference type="InterPro" id="IPR008280">
    <property type="entry name" value="Tub_FtsZ_C"/>
</dbReference>
<dbReference type="InterPro" id="IPR000217">
    <property type="entry name" value="Tubulin"/>
</dbReference>
<dbReference type="InterPro" id="IPR037103">
    <property type="entry name" value="Tubulin/FtsZ-like_C"/>
</dbReference>
<dbReference type="InterPro" id="IPR018316">
    <property type="entry name" value="Tubulin/FtsZ_2-layer-sand-dom"/>
</dbReference>
<dbReference type="InterPro" id="IPR036525">
    <property type="entry name" value="Tubulin/FtsZ_GTPase_sf"/>
</dbReference>
<dbReference type="InterPro" id="IPR023123">
    <property type="entry name" value="Tubulin_C"/>
</dbReference>
<dbReference type="InterPro" id="IPR017975">
    <property type="entry name" value="Tubulin_CS"/>
</dbReference>
<dbReference type="InterPro" id="IPR003008">
    <property type="entry name" value="Tubulin_FtsZ_GTPase"/>
</dbReference>
<dbReference type="PANTHER" id="PTHR11588">
    <property type="entry name" value="TUBULIN"/>
    <property type="match status" value="1"/>
</dbReference>
<dbReference type="Pfam" id="PF00091">
    <property type="entry name" value="Tubulin"/>
    <property type="match status" value="1"/>
</dbReference>
<dbReference type="Pfam" id="PF03953">
    <property type="entry name" value="Tubulin_C"/>
    <property type="match status" value="1"/>
</dbReference>
<dbReference type="PRINTS" id="PR01162">
    <property type="entry name" value="ALPHATUBULIN"/>
</dbReference>
<dbReference type="PRINTS" id="PR01161">
    <property type="entry name" value="TUBULIN"/>
</dbReference>
<dbReference type="SMART" id="SM00864">
    <property type="entry name" value="Tubulin"/>
    <property type="match status" value="1"/>
</dbReference>
<dbReference type="SMART" id="SM00865">
    <property type="entry name" value="Tubulin_C"/>
    <property type="match status" value="1"/>
</dbReference>
<dbReference type="SUPFAM" id="SSF55307">
    <property type="entry name" value="Tubulin C-terminal domain-like"/>
    <property type="match status" value="1"/>
</dbReference>
<dbReference type="SUPFAM" id="SSF52490">
    <property type="entry name" value="Tubulin nucleotide-binding domain-like"/>
    <property type="match status" value="1"/>
</dbReference>
<dbReference type="PROSITE" id="PS00227">
    <property type="entry name" value="TUBULIN"/>
    <property type="match status" value="1"/>
</dbReference>
<proteinExistence type="evidence at protein level"/>
<comment type="function">
    <text>Tubulin is the major constituent of microtubules, a cylinder consisting of laterally associated linear protofilaments composed of alpha- and beta-tubulin heterodimers. Microtubules grow by the addition of GTP-tubulin dimers to the microtubule end, where a stabilizing cap forms. Below the cap, tubulin dimers are in GDP-bound state, owing to GTPase activity of alpha-tubulin.</text>
</comment>
<comment type="catalytic activity">
    <reaction evidence="2">
        <text>GTP + H2O = GDP + phosphate + H(+)</text>
        <dbReference type="Rhea" id="RHEA:19669"/>
        <dbReference type="ChEBI" id="CHEBI:15377"/>
        <dbReference type="ChEBI" id="CHEBI:15378"/>
        <dbReference type="ChEBI" id="CHEBI:37565"/>
        <dbReference type="ChEBI" id="CHEBI:43474"/>
        <dbReference type="ChEBI" id="CHEBI:58189"/>
    </reaction>
    <physiologicalReaction direction="left-to-right" evidence="2">
        <dbReference type="Rhea" id="RHEA:19670"/>
    </physiologicalReaction>
</comment>
<comment type="cofactor">
    <cofactor evidence="2">
        <name>Mg(2+)</name>
        <dbReference type="ChEBI" id="CHEBI:18420"/>
    </cofactor>
</comment>
<comment type="subunit">
    <text evidence="4">Dimer of alpha and beta chains. A typical microtubule is a hollow water-filled tube with an outer diameter of 25 nm and an inner diameter of 15 nM. Alpha-beta heterodimers associate head-to-tail to form protofilaments running lengthwise along the microtubule wall with the beta-tubulin subunit facing the microtubule plus end conferring a structural polarity. Microtubules usually have 13 protofilaments but different protofilament numbers can be found in some organisms and specialized cells. Interacts with Ote (PubMed:22751930).</text>
</comment>
<comment type="subcellular location">
    <subcellularLocation>
        <location>Cytoplasm</location>
        <location>Cytoskeleton</location>
    </subcellularLocation>
</comment>
<comment type="PTM">
    <text evidence="1">Undergoes a tyrosination/detyrosination cycle, the cyclic removal and re-addition of a C-terminal tyrosine residue by the enzymes tubulin tyrosine carboxypeptidase (TTCP) and tubulin tyrosine ligase (TTL), respectively.</text>
</comment>
<comment type="PTM">
    <text evidence="1 3 6">Acetylation of alpha chains at Lys-40 stabilizes microtubules and affects affinity and processivity of microtubule motors. This modification has a role in multiple cellular functions, ranging from cell motility, cell cycle progression or cell differentiation to intracellular trafficking and signaling (By similarity). During the early stages of oogenesis lky/Alpha-tubulin N-acetyltransferase 2 is the main acetyltransferase responsible for Lys-40 acetylation in germline cells while Atat/alpha-tubulin N-acetyltransferase 1 is the main acetyltransferase responsible for Lys-40 acetylation in somatic cells (PubMed:36342916).</text>
</comment>
<comment type="disruption phenotype">
    <text evidence="5">RNAi-mediated knockdown eliminates microtubules in fat body cells, resulting in defective nuclear positioning.</text>
</comment>
<comment type="similarity">
    <text evidence="7">Belongs to the tubulin family.</text>
</comment>
<reference key="1">
    <citation type="journal article" date="1986" name="Proc. Natl. Acad. Sci. U.S.A.">
        <title>Tissue-specific and constitutive alpha-tubulin genes of Drosophila melanogaster code for structurally distinct proteins.</title>
        <authorList>
            <person name="Theurkauf W.E."/>
            <person name="Baum H."/>
            <person name="Bo J."/>
            <person name="Wensink P.C."/>
        </authorList>
    </citation>
    <scope>NUCLEOTIDE SEQUENCE [GENOMIC DNA]</scope>
</reference>
<reference key="2">
    <citation type="journal article" date="2000" name="Science">
        <title>The genome sequence of Drosophila melanogaster.</title>
        <authorList>
            <person name="Adams M.D."/>
            <person name="Celniker S.E."/>
            <person name="Holt R.A."/>
            <person name="Evans C.A."/>
            <person name="Gocayne J.D."/>
            <person name="Amanatides P.G."/>
            <person name="Scherer S.E."/>
            <person name="Li P.W."/>
            <person name="Hoskins R.A."/>
            <person name="Galle R.F."/>
            <person name="George R.A."/>
            <person name="Lewis S.E."/>
            <person name="Richards S."/>
            <person name="Ashburner M."/>
            <person name="Henderson S.N."/>
            <person name="Sutton G.G."/>
            <person name="Wortman J.R."/>
            <person name="Yandell M.D."/>
            <person name="Zhang Q."/>
            <person name="Chen L.X."/>
            <person name="Brandon R.C."/>
            <person name="Rogers Y.-H.C."/>
            <person name="Blazej R.G."/>
            <person name="Champe M."/>
            <person name="Pfeiffer B.D."/>
            <person name="Wan K.H."/>
            <person name="Doyle C."/>
            <person name="Baxter E.G."/>
            <person name="Helt G."/>
            <person name="Nelson C.R."/>
            <person name="Miklos G.L.G."/>
            <person name="Abril J.F."/>
            <person name="Agbayani A."/>
            <person name="An H.-J."/>
            <person name="Andrews-Pfannkoch C."/>
            <person name="Baldwin D."/>
            <person name="Ballew R.M."/>
            <person name="Basu A."/>
            <person name="Baxendale J."/>
            <person name="Bayraktaroglu L."/>
            <person name="Beasley E.M."/>
            <person name="Beeson K.Y."/>
            <person name="Benos P.V."/>
            <person name="Berman B.P."/>
            <person name="Bhandari D."/>
            <person name="Bolshakov S."/>
            <person name="Borkova D."/>
            <person name="Botchan M.R."/>
            <person name="Bouck J."/>
            <person name="Brokstein P."/>
            <person name="Brottier P."/>
            <person name="Burtis K.C."/>
            <person name="Busam D.A."/>
            <person name="Butler H."/>
            <person name="Cadieu E."/>
            <person name="Center A."/>
            <person name="Chandra I."/>
            <person name="Cherry J.M."/>
            <person name="Cawley S."/>
            <person name="Dahlke C."/>
            <person name="Davenport L.B."/>
            <person name="Davies P."/>
            <person name="de Pablos B."/>
            <person name="Delcher A."/>
            <person name="Deng Z."/>
            <person name="Mays A.D."/>
            <person name="Dew I."/>
            <person name="Dietz S.M."/>
            <person name="Dodson K."/>
            <person name="Doup L.E."/>
            <person name="Downes M."/>
            <person name="Dugan-Rocha S."/>
            <person name="Dunkov B.C."/>
            <person name="Dunn P."/>
            <person name="Durbin K.J."/>
            <person name="Evangelista C.C."/>
            <person name="Ferraz C."/>
            <person name="Ferriera S."/>
            <person name="Fleischmann W."/>
            <person name="Fosler C."/>
            <person name="Gabrielian A.E."/>
            <person name="Garg N.S."/>
            <person name="Gelbart W.M."/>
            <person name="Glasser K."/>
            <person name="Glodek A."/>
            <person name="Gong F."/>
            <person name="Gorrell J.H."/>
            <person name="Gu Z."/>
            <person name="Guan P."/>
            <person name="Harris M."/>
            <person name="Harris N.L."/>
            <person name="Harvey D.A."/>
            <person name="Heiman T.J."/>
            <person name="Hernandez J.R."/>
            <person name="Houck J."/>
            <person name="Hostin D."/>
            <person name="Houston K.A."/>
            <person name="Howland T.J."/>
            <person name="Wei M.-H."/>
            <person name="Ibegwam C."/>
            <person name="Jalali M."/>
            <person name="Kalush F."/>
            <person name="Karpen G.H."/>
            <person name="Ke Z."/>
            <person name="Kennison J.A."/>
            <person name="Ketchum K.A."/>
            <person name="Kimmel B.E."/>
            <person name="Kodira C.D."/>
            <person name="Kraft C.L."/>
            <person name="Kravitz S."/>
            <person name="Kulp D."/>
            <person name="Lai Z."/>
            <person name="Lasko P."/>
            <person name="Lei Y."/>
            <person name="Levitsky A.A."/>
            <person name="Li J.H."/>
            <person name="Li Z."/>
            <person name="Liang Y."/>
            <person name="Lin X."/>
            <person name="Liu X."/>
            <person name="Mattei B."/>
            <person name="McIntosh T.C."/>
            <person name="McLeod M.P."/>
            <person name="McPherson D."/>
            <person name="Merkulov G."/>
            <person name="Milshina N.V."/>
            <person name="Mobarry C."/>
            <person name="Morris J."/>
            <person name="Moshrefi A."/>
            <person name="Mount S.M."/>
            <person name="Moy M."/>
            <person name="Murphy B."/>
            <person name="Murphy L."/>
            <person name="Muzny D.M."/>
            <person name="Nelson D.L."/>
            <person name="Nelson D.R."/>
            <person name="Nelson K.A."/>
            <person name="Nixon K."/>
            <person name="Nusskern D.R."/>
            <person name="Pacleb J.M."/>
            <person name="Palazzolo M."/>
            <person name="Pittman G.S."/>
            <person name="Pan S."/>
            <person name="Pollard J."/>
            <person name="Puri V."/>
            <person name="Reese M.G."/>
            <person name="Reinert K."/>
            <person name="Remington K."/>
            <person name="Saunders R.D.C."/>
            <person name="Scheeler F."/>
            <person name="Shen H."/>
            <person name="Shue B.C."/>
            <person name="Siden-Kiamos I."/>
            <person name="Simpson M."/>
            <person name="Skupski M.P."/>
            <person name="Smith T.J."/>
            <person name="Spier E."/>
            <person name="Spradling A.C."/>
            <person name="Stapleton M."/>
            <person name="Strong R."/>
            <person name="Sun E."/>
            <person name="Svirskas R."/>
            <person name="Tector C."/>
            <person name="Turner R."/>
            <person name="Venter E."/>
            <person name="Wang A.H."/>
            <person name="Wang X."/>
            <person name="Wang Z.-Y."/>
            <person name="Wassarman D.A."/>
            <person name="Weinstock G.M."/>
            <person name="Weissenbach J."/>
            <person name="Williams S.M."/>
            <person name="Woodage T."/>
            <person name="Worley K.C."/>
            <person name="Wu D."/>
            <person name="Yang S."/>
            <person name="Yao Q.A."/>
            <person name="Ye J."/>
            <person name="Yeh R.-F."/>
            <person name="Zaveri J.S."/>
            <person name="Zhan M."/>
            <person name="Zhang G."/>
            <person name="Zhao Q."/>
            <person name="Zheng L."/>
            <person name="Zheng X.H."/>
            <person name="Zhong F.N."/>
            <person name="Zhong W."/>
            <person name="Zhou X."/>
            <person name="Zhu S.C."/>
            <person name="Zhu X."/>
            <person name="Smith H.O."/>
            <person name="Gibbs R.A."/>
            <person name="Myers E.W."/>
            <person name="Rubin G.M."/>
            <person name="Venter J.C."/>
        </authorList>
    </citation>
    <scope>NUCLEOTIDE SEQUENCE [LARGE SCALE GENOMIC DNA]</scope>
    <source>
        <strain>Berkeley</strain>
    </source>
</reference>
<reference key="3">
    <citation type="journal article" date="2002" name="Genome Biol.">
        <title>Annotation of the Drosophila melanogaster euchromatic genome: a systematic review.</title>
        <authorList>
            <person name="Misra S."/>
            <person name="Crosby M.A."/>
            <person name="Mungall C.J."/>
            <person name="Matthews B.B."/>
            <person name="Campbell K.S."/>
            <person name="Hradecky P."/>
            <person name="Huang Y."/>
            <person name="Kaminker J.S."/>
            <person name="Millburn G.H."/>
            <person name="Prochnik S.E."/>
            <person name="Smith C.D."/>
            <person name="Tupy J.L."/>
            <person name="Whitfield E.J."/>
            <person name="Bayraktaroglu L."/>
            <person name="Berman B.P."/>
            <person name="Bettencourt B.R."/>
            <person name="Celniker S.E."/>
            <person name="de Grey A.D.N.J."/>
            <person name="Drysdale R.A."/>
            <person name="Harris N.L."/>
            <person name="Richter J."/>
            <person name="Russo S."/>
            <person name="Schroeder A.J."/>
            <person name="Shu S.Q."/>
            <person name="Stapleton M."/>
            <person name="Yamada C."/>
            <person name="Ashburner M."/>
            <person name="Gelbart W.M."/>
            <person name="Rubin G.M."/>
            <person name="Lewis S.E."/>
        </authorList>
    </citation>
    <scope>GENOME REANNOTATION</scope>
    <source>
        <strain>Berkeley</strain>
    </source>
</reference>
<reference key="4">
    <citation type="submission" date="2004-04" db="EMBL/GenBank/DDBJ databases">
        <authorList>
            <person name="Stapleton M."/>
            <person name="Carlson J.W."/>
            <person name="Chavez C."/>
            <person name="Frise E."/>
            <person name="George R.A."/>
            <person name="Pacleb J.M."/>
            <person name="Park S."/>
            <person name="Wan K.H."/>
            <person name="Yu C."/>
            <person name="Rubin G.M."/>
            <person name="Celniker S.E."/>
        </authorList>
    </citation>
    <scope>NUCLEOTIDE SEQUENCE [LARGE SCALE MRNA]</scope>
    <source>
        <strain>Berkeley</strain>
        <tissue>Testis</tissue>
    </source>
</reference>
<reference key="5">
    <citation type="journal article" date="2012" name="Mol. Cell. Biol.">
        <title>Functional analysis of centrosomal kinase substrates in Drosophila melanogaster reveals a new function of the nuclear envelope component otefin in cell cycle progression.</title>
        <authorList>
            <person name="Habermann K."/>
            <person name="Mirgorodskaya E."/>
            <person name="Gobom J."/>
            <person name="Lehmann V."/>
            <person name="Mueller H."/>
            <person name="Bluemlein K."/>
            <person name="Deery M.J."/>
            <person name="Czogiel I."/>
            <person name="Erdmann C."/>
            <person name="Ralser M."/>
            <person name="von Kries J.P."/>
            <person name="Lange B.M."/>
        </authorList>
    </citation>
    <scope>INTERACTION WITH OTE</scope>
</reference>
<reference key="6">
    <citation type="journal article" date="2020" name="Nat. Cell Biol.">
        <title>A perinuclear microtubule-organizing centre controls nuclear positioning and basement membrane secretion.</title>
        <authorList>
            <person name="Zheng Y."/>
            <person name="Buchwalter R.A."/>
            <person name="Zheng C."/>
            <person name="Wight E.M."/>
            <person name="Chen J.V."/>
            <person name="Megraw T.L."/>
        </authorList>
    </citation>
    <scope>DISRUPTION PHENOTYPE</scope>
</reference>
<reference key="7">
    <citation type="journal article" date="2022" name="PLoS ONE">
        <title>Drosophila CG17003/leaky (lky) is required for microtubule acetylation in early germ cells in Drosophila ovary.</title>
        <authorList>
            <person name="Antel M."/>
            <person name="Simao T."/>
            <person name="Bener M.B."/>
            <person name="Inaba M."/>
        </authorList>
    </citation>
    <scope>ACETYLATION AT LYS-40</scope>
    <scope>MUTAGENESIS OF LYS-40</scope>
</reference>
<name>TBA1_DROME</name>
<keyword id="KW-0002">3D-structure</keyword>
<keyword id="KW-0007">Acetylation</keyword>
<keyword id="KW-0963">Cytoplasm</keyword>
<keyword id="KW-0206">Cytoskeleton</keyword>
<keyword id="KW-0342">GTP-binding</keyword>
<keyword id="KW-0378">Hydrolase</keyword>
<keyword id="KW-0460">Magnesium</keyword>
<keyword id="KW-0479">Metal-binding</keyword>
<keyword id="KW-0493">Microtubule</keyword>
<keyword id="KW-0547">Nucleotide-binding</keyword>
<keyword id="KW-1185">Reference proteome</keyword>